<dbReference type="EMBL" id="AE015925">
    <property type="protein sequence ID" value="AAP04864.1"/>
    <property type="molecule type" value="Genomic_DNA"/>
</dbReference>
<dbReference type="RefSeq" id="WP_011006085.1">
    <property type="nucleotide sequence ID" value="NC_003361.3"/>
</dbReference>
<dbReference type="SMR" id="P59752"/>
<dbReference type="STRING" id="227941.CCA_00112"/>
<dbReference type="KEGG" id="cca:CCA_00112"/>
<dbReference type="eggNOG" id="COG0099">
    <property type="taxonomic scope" value="Bacteria"/>
</dbReference>
<dbReference type="HOGENOM" id="CLU_103849_1_2_0"/>
<dbReference type="OrthoDB" id="9803610at2"/>
<dbReference type="Proteomes" id="UP000002193">
    <property type="component" value="Chromosome"/>
</dbReference>
<dbReference type="GO" id="GO:0005829">
    <property type="term" value="C:cytosol"/>
    <property type="evidence" value="ECO:0007669"/>
    <property type="project" value="TreeGrafter"/>
</dbReference>
<dbReference type="GO" id="GO:0015935">
    <property type="term" value="C:small ribosomal subunit"/>
    <property type="evidence" value="ECO:0007669"/>
    <property type="project" value="TreeGrafter"/>
</dbReference>
<dbReference type="GO" id="GO:0019843">
    <property type="term" value="F:rRNA binding"/>
    <property type="evidence" value="ECO:0007669"/>
    <property type="project" value="UniProtKB-UniRule"/>
</dbReference>
<dbReference type="GO" id="GO:0003735">
    <property type="term" value="F:structural constituent of ribosome"/>
    <property type="evidence" value="ECO:0007669"/>
    <property type="project" value="InterPro"/>
</dbReference>
<dbReference type="GO" id="GO:0000049">
    <property type="term" value="F:tRNA binding"/>
    <property type="evidence" value="ECO:0007669"/>
    <property type="project" value="UniProtKB-UniRule"/>
</dbReference>
<dbReference type="GO" id="GO:0006412">
    <property type="term" value="P:translation"/>
    <property type="evidence" value="ECO:0007669"/>
    <property type="project" value="UniProtKB-UniRule"/>
</dbReference>
<dbReference type="FunFam" id="1.10.8.50:FF:000001">
    <property type="entry name" value="30S ribosomal protein S13"/>
    <property type="match status" value="1"/>
</dbReference>
<dbReference type="FunFam" id="4.10.910.10:FF:000001">
    <property type="entry name" value="30S ribosomal protein S13"/>
    <property type="match status" value="1"/>
</dbReference>
<dbReference type="Gene3D" id="1.10.8.50">
    <property type="match status" value="1"/>
</dbReference>
<dbReference type="Gene3D" id="4.10.910.10">
    <property type="entry name" value="30s ribosomal protein s13, domain 2"/>
    <property type="match status" value="1"/>
</dbReference>
<dbReference type="HAMAP" id="MF_01315">
    <property type="entry name" value="Ribosomal_uS13"/>
    <property type="match status" value="1"/>
</dbReference>
<dbReference type="InterPro" id="IPR027437">
    <property type="entry name" value="Rbsml_uS13_C"/>
</dbReference>
<dbReference type="InterPro" id="IPR001892">
    <property type="entry name" value="Ribosomal_uS13"/>
</dbReference>
<dbReference type="InterPro" id="IPR010979">
    <property type="entry name" value="Ribosomal_uS13-like_H2TH"/>
</dbReference>
<dbReference type="InterPro" id="IPR019980">
    <property type="entry name" value="Ribosomal_uS13_bac-type"/>
</dbReference>
<dbReference type="InterPro" id="IPR018269">
    <property type="entry name" value="Ribosomal_uS13_CS"/>
</dbReference>
<dbReference type="NCBIfam" id="TIGR03631">
    <property type="entry name" value="uS13_bact"/>
    <property type="match status" value="1"/>
</dbReference>
<dbReference type="PANTHER" id="PTHR10871">
    <property type="entry name" value="30S RIBOSOMAL PROTEIN S13/40S RIBOSOMAL PROTEIN S18"/>
    <property type="match status" value="1"/>
</dbReference>
<dbReference type="PANTHER" id="PTHR10871:SF1">
    <property type="entry name" value="SMALL RIBOSOMAL SUBUNIT PROTEIN US13M"/>
    <property type="match status" value="1"/>
</dbReference>
<dbReference type="Pfam" id="PF00416">
    <property type="entry name" value="Ribosomal_S13"/>
    <property type="match status" value="1"/>
</dbReference>
<dbReference type="PIRSF" id="PIRSF002134">
    <property type="entry name" value="Ribosomal_S13"/>
    <property type="match status" value="1"/>
</dbReference>
<dbReference type="SUPFAM" id="SSF46946">
    <property type="entry name" value="S13-like H2TH domain"/>
    <property type="match status" value="1"/>
</dbReference>
<dbReference type="PROSITE" id="PS00646">
    <property type="entry name" value="RIBOSOMAL_S13_1"/>
    <property type="match status" value="1"/>
</dbReference>
<dbReference type="PROSITE" id="PS50159">
    <property type="entry name" value="RIBOSOMAL_S13_2"/>
    <property type="match status" value="1"/>
</dbReference>
<sequence>MPRIIGIDIPAKKKLKISLTYIYGIGPALSEEIIAKLQLNPEARAVELTEEEIGRLNSLLQSEYVVEGDLRRRVQSDIKRLISIHAYRGQRHRLSLPVRGQRTKTNSRTRKGKRKTVAGKKK</sequence>
<evidence type="ECO:0000255" key="1">
    <source>
        <dbReference type="HAMAP-Rule" id="MF_01315"/>
    </source>
</evidence>
<evidence type="ECO:0000256" key="2">
    <source>
        <dbReference type="SAM" id="MobiDB-lite"/>
    </source>
</evidence>
<evidence type="ECO:0000305" key="3"/>
<reference key="1">
    <citation type="journal article" date="2003" name="Nucleic Acids Res.">
        <title>Genome sequence of Chlamydophila caviae (Chlamydia psittaci GPIC): examining the role of niche-specific genes in the evolution of the Chlamydiaceae.</title>
        <authorList>
            <person name="Read T.D."/>
            <person name="Myers G.S.A."/>
            <person name="Brunham R.C."/>
            <person name="Nelson W.C."/>
            <person name="Paulsen I.T."/>
            <person name="Heidelberg J.F."/>
            <person name="Holtzapple E.K."/>
            <person name="Khouri H.M."/>
            <person name="Federova N.B."/>
            <person name="Carty H.A."/>
            <person name="Umayam L.A."/>
            <person name="Haft D.H."/>
            <person name="Peterson J.D."/>
            <person name="Beanan M.J."/>
            <person name="White O."/>
            <person name="Salzberg S.L."/>
            <person name="Hsia R.-C."/>
            <person name="McClarty G."/>
            <person name="Rank R.G."/>
            <person name="Bavoil P.M."/>
            <person name="Fraser C.M."/>
        </authorList>
    </citation>
    <scope>NUCLEOTIDE SEQUENCE [LARGE SCALE GENOMIC DNA]</scope>
    <source>
        <strain>ATCC VR-813 / DSM 19441 / 03DC25 / GPIC</strain>
    </source>
</reference>
<proteinExistence type="inferred from homology"/>
<gene>
    <name evidence="1" type="primary">rpsM</name>
    <name type="ordered locus">CCA_00112</name>
</gene>
<accession>P59752</accession>
<protein>
    <recommendedName>
        <fullName evidence="1">Small ribosomal subunit protein uS13</fullName>
    </recommendedName>
    <alternativeName>
        <fullName evidence="3">30S ribosomal protein S13</fullName>
    </alternativeName>
</protein>
<comment type="function">
    <text evidence="1">Located at the top of the head of the 30S subunit, it contacts several helices of the 16S rRNA. In the 70S ribosome it contacts the 23S rRNA (bridge B1a) and protein L5 of the 50S subunit (bridge B1b), connecting the 2 subunits; these bridges are implicated in subunit movement. Contacts the tRNAs in the A and P-sites.</text>
</comment>
<comment type="subunit">
    <text evidence="1">Part of the 30S ribosomal subunit. Forms a loose heterodimer with protein S19. Forms two bridges to the 50S subunit in the 70S ribosome.</text>
</comment>
<comment type="similarity">
    <text evidence="1">Belongs to the universal ribosomal protein uS13 family.</text>
</comment>
<keyword id="KW-0687">Ribonucleoprotein</keyword>
<keyword id="KW-0689">Ribosomal protein</keyword>
<keyword id="KW-0694">RNA-binding</keyword>
<keyword id="KW-0699">rRNA-binding</keyword>
<keyword id="KW-0820">tRNA-binding</keyword>
<organism>
    <name type="scientific">Chlamydia caviae (strain ATCC VR-813 / DSM 19441 / 03DC25 / GPIC)</name>
    <name type="common">Chlamydophila caviae</name>
    <dbReference type="NCBI Taxonomy" id="227941"/>
    <lineage>
        <taxon>Bacteria</taxon>
        <taxon>Pseudomonadati</taxon>
        <taxon>Chlamydiota</taxon>
        <taxon>Chlamydiia</taxon>
        <taxon>Chlamydiales</taxon>
        <taxon>Chlamydiaceae</taxon>
        <taxon>Chlamydia/Chlamydophila group</taxon>
        <taxon>Chlamydia</taxon>
    </lineage>
</organism>
<feature type="chain" id="PRO_0000132077" description="Small ribosomal subunit protein uS13">
    <location>
        <begin position="1"/>
        <end position="122"/>
    </location>
</feature>
<feature type="region of interest" description="Disordered" evidence="2">
    <location>
        <begin position="93"/>
        <end position="122"/>
    </location>
</feature>
<feature type="compositionally biased region" description="Basic residues" evidence="2">
    <location>
        <begin position="101"/>
        <end position="122"/>
    </location>
</feature>
<name>RS13_CHLCV</name>